<accession>B0SXB7</accession>
<gene>
    <name evidence="1" type="primary">prfB</name>
    <name type="ordered locus">Caul_2575</name>
</gene>
<dbReference type="EMBL" id="CP000927">
    <property type="protein sequence ID" value="ABZ71702.1"/>
    <property type="molecule type" value="Genomic_DNA"/>
</dbReference>
<dbReference type="SMR" id="B0SXB7"/>
<dbReference type="STRING" id="366602.Caul_2575"/>
<dbReference type="KEGG" id="cak:Caul_2575"/>
<dbReference type="eggNOG" id="COG1186">
    <property type="taxonomic scope" value="Bacteria"/>
</dbReference>
<dbReference type="HOGENOM" id="CLU_036856_6_0_5"/>
<dbReference type="GO" id="GO:0005737">
    <property type="term" value="C:cytoplasm"/>
    <property type="evidence" value="ECO:0007669"/>
    <property type="project" value="UniProtKB-SubCell"/>
</dbReference>
<dbReference type="GO" id="GO:0016149">
    <property type="term" value="F:translation release factor activity, codon specific"/>
    <property type="evidence" value="ECO:0007669"/>
    <property type="project" value="UniProtKB-UniRule"/>
</dbReference>
<dbReference type="FunFam" id="3.30.160.20:FF:000010">
    <property type="entry name" value="Peptide chain release factor 2"/>
    <property type="match status" value="1"/>
</dbReference>
<dbReference type="Gene3D" id="3.30.160.20">
    <property type="match status" value="1"/>
</dbReference>
<dbReference type="Gene3D" id="3.30.70.1660">
    <property type="match status" value="1"/>
</dbReference>
<dbReference type="Gene3D" id="1.20.58.410">
    <property type="entry name" value="Release factor"/>
    <property type="match status" value="1"/>
</dbReference>
<dbReference type="HAMAP" id="MF_00094">
    <property type="entry name" value="Rel_fac_2"/>
    <property type="match status" value="1"/>
</dbReference>
<dbReference type="InterPro" id="IPR005139">
    <property type="entry name" value="PCRF"/>
</dbReference>
<dbReference type="InterPro" id="IPR000352">
    <property type="entry name" value="Pep_chain_release_fac_I"/>
</dbReference>
<dbReference type="InterPro" id="IPR045853">
    <property type="entry name" value="Pep_chain_release_fac_I_sf"/>
</dbReference>
<dbReference type="InterPro" id="IPR004374">
    <property type="entry name" value="PrfB"/>
</dbReference>
<dbReference type="NCBIfam" id="TIGR00020">
    <property type="entry name" value="prfB"/>
    <property type="match status" value="1"/>
</dbReference>
<dbReference type="PANTHER" id="PTHR43116:SF3">
    <property type="entry name" value="CLASS I PEPTIDE CHAIN RELEASE FACTOR"/>
    <property type="match status" value="1"/>
</dbReference>
<dbReference type="PANTHER" id="PTHR43116">
    <property type="entry name" value="PEPTIDE CHAIN RELEASE FACTOR 2"/>
    <property type="match status" value="1"/>
</dbReference>
<dbReference type="Pfam" id="PF03462">
    <property type="entry name" value="PCRF"/>
    <property type="match status" value="1"/>
</dbReference>
<dbReference type="Pfam" id="PF00472">
    <property type="entry name" value="RF-1"/>
    <property type="match status" value="1"/>
</dbReference>
<dbReference type="SMART" id="SM00937">
    <property type="entry name" value="PCRF"/>
    <property type="match status" value="1"/>
</dbReference>
<dbReference type="SUPFAM" id="SSF75620">
    <property type="entry name" value="Release factor"/>
    <property type="match status" value="1"/>
</dbReference>
<dbReference type="PROSITE" id="PS00745">
    <property type="entry name" value="RF_PROK_I"/>
    <property type="match status" value="1"/>
</dbReference>
<proteinExistence type="inferred from homology"/>
<evidence type="ECO:0000255" key="1">
    <source>
        <dbReference type="HAMAP-Rule" id="MF_00094"/>
    </source>
</evidence>
<feature type="chain" id="PRO_1000075523" description="Peptide chain release factor 2">
    <location>
        <begin position="1"/>
        <end position="367"/>
    </location>
</feature>
<feature type="modified residue" description="N5-methylglutamine" evidence="1">
    <location>
        <position position="247"/>
    </location>
</feature>
<organism>
    <name type="scientific">Caulobacter sp. (strain K31)</name>
    <dbReference type="NCBI Taxonomy" id="366602"/>
    <lineage>
        <taxon>Bacteria</taxon>
        <taxon>Pseudomonadati</taxon>
        <taxon>Pseudomonadota</taxon>
        <taxon>Alphaproteobacteria</taxon>
        <taxon>Caulobacterales</taxon>
        <taxon>Caulobacteraceae</taxon>
        <taxon>Caulobacter</taxon>
    </lineage>
</organism>
<name>RF2_CAUSK</name>
<sequence length="367" mass="40252">MSRPQRLTSSSPWDCSGGVFDWDAALRKLDELNARVEDPTLWDRPSEAQAVSRDRASLAARVGAVQELEGGLKDALEYAELADMEGDEALLEDARAQLKDLKDRAGRAELEALLSGEADGNDCYVEINSGAGGTESCDWAGMLLRMYSRWANAHKMSVELVEETAGDQVGIKSATLLVKGANAYGWLKTEAGVHRLVRISPYDAAAKRHTSFASAWVYPVVDDTIEIDINPSDVRTDTYRASGAGGQHINKTDSAVRLTHIPTGIAVACQAGRSQHQNREEAWKMLRARLYEAELQRREAAQQALEDQKTDIGWGHQIRSYVLQPYQMVKDLRTNVETSDTQGVLDGDLDAFMGASLAQRVGATRDA</sequence>
<comment type="function">
    <text evidence="1">Peptide chain release factor 2 directs the termination of translation in response to the peptide chain termination codons UGA and UAA.</text>
</comment>
<comment type="subcellular location">
    <subcellularLocation>
        <location evidence="1">Cytoplasm</location>
    </subcellularLocation>
</comment>
<comment type="PTM">
    <text evidence="1">Methylated by PrmC. Methylation increases the termination efficiency of RF2.</text>
</comment>
<comment type="similarity">
    <text evidence="1">Belongs to the prokaryotic/mitochondrial release factor family.</text>
</comment>
<protein>
    <recommendedName>
        <fullName evidence="1">Peptide chain release factor 2</fullName>
        <shortName evidence="1">RF-2</shortName>
    </recommendedName>
</protein>
<keyword id="KW-0963">Cytoplasm</keyword>
<keyword id="KW-0488">Methylation</keyword>
<keyword id="KW-0648">Protein biosynthesis</keyword>
<reference key="1">
    <citation type="submission" date="2008-01" db="EMBL/GenBank/DDBJ databases">
        <title>Complete sequence of chromosome of Caulobacter sp. K31.</title>
        <authorList>
            <consortium name="US DOE Joint Genome Institute"/>
            <person name="Copeland A."/>
            <person name="Lucas S."/>
            <person name="Lapidus A."/>
            <person name="Barry K."/>
            <person name="Glavina del Rio T."/>
            <person name="Dalin E."/>
            <person name="Tice H."/>
            <person name="Pitluck S."/>
            <person name="Bruce D."/>
            <person name="Goodwin L."/>
            <person name="Thompson L.S."/>
            <person name="Brettin T."/>
            <person name="Detter J.C."/>
            <person name="Han C."/>
            <person name="Schmutz J."/>
            <person name="Larimer F."/>
            <person name="Land M."/>
            <person name="Hauser L."/>
            <person name="Kyrpides N."/>
            <person name="Kim E."/>
            <person name="Stephens C."/>
            <person name="Richardson P."/>
        </authorList>
    </citation>
    <scope>NUCLEOTIDE SEQUENCE [LARGE SCALE GENOMIC DNA]</scope>
    <source>
        <strain>K31</strain>
    </source>
</reference>